<sequence>MARYTGPVTRKSRRLRTDLVGGDQAFEKRPYPPGQHGRARIKESEYLLQLQEKQKARFTYGVMEKQFRRYYEEAVRQPGKTGEELLKILESRLDNVIYRAGLARTRRMARQLVSHGHFNVNGVHVNVPSYRVSQYDIVDVRDKSLNTVPFQIARETAGERPIPSWLQVVGERQRVLIHQLPERAQIDVPLTEQLIVEYYSK</sequence>
<gene>
    <name evidence="1" type="primary">rpsD</name>
    <name type="ordered locus">BCG_3523c</name>
</gene>
<name>RS4_MYCBP</name>
<dbReference type="EMBL" id="AM408590">
    <property type="protein sequence ID" value="CAL73512.1"/>
    <property type="molecule type" value="Genomic_DNA"/>
</dbReference>
<dbReference type="RefSeq" id="WP_003418354.1">
    <property type="nucleotide sequence ID" value="NC_008769.1"/>
</dbReference>
<dbReference type="SMR" id="A1KPE4"/>
<dbReference type="GeneID" id="45427447"/>
<dbReference type="KEGG" id="mbb:BCG_3523c"/>
<dbReference type="HOGENOM" id="CLU_092403_0_2_11"/>
<dbReference type="Proteomes" id="UP000001472">
    <property type="component" value="Chromosome"/>
</dbReference>
<dbReference type="GO" id="GO:0015935">
    <property type="term" value="C:small ribosomal subunit"/>
    <property type="evidence" value="ECO:0007669"/>
    <property type="project" value="InterPro"/>
</dbReference>
<dbReference type="GO" id="GO:0019843">
    <property type="term" value="F:rRNA binding"/>
    <property type="evidence" value="ECO:0007669"/>
    <property type="project" value="UniProtKB-UniRule"/>
</dbReference>
<dbReference type="GO" id="GO:0003735">
    <property type="term" value="F:structural constituent of ribosome"/>
    <property type="evidence" value="ECO:0007669"/>
    <property type="project" value="InterPro"/>
</dbReference>
<dbReference type="GO" id="GO:0042274">
    <property type="term" value="P:ribosomal small subunit biogenesis"/>
    <property type="evidence" value="ECO:0007669"/>
    <property type="project" value="TreeGrafter"/>
</dbReference>
<dbReference type="GO" id="GO:0006412">
    <property type="term" value="P:translation"/>
    <property type="evidence" value="ECO:0007669"/>
    <property type="project" value="UniProtKB-UniRule"/>
</dbReference>
<dbReference type="CDD" id="cd00165">
    <property type="entry name" value="S4"/>
    <property type="match status" value="1"/>
</dbReference>
<dbReference type="FunFam" id="3.10.290.10:FF:000001">
    <property type="entry name" value="30S ribosomal protein S4"/>
    <property type="match status" value="1"/>
</dbReference>
<dbReference type="Gene3D" id="1.10.1050.10">
    <property type="entry name" value="Ribosomal Protein S4 Delta 41, Chain A, domain 1"/>
    <property type="match status" value="1"/>
</dbReference>
<dbReference type="Gene3D" id="3.10.290.10">
    <property type="entry name" value="RNA-binding S4 domain"/>
    <property type="match status" value="1"/>
</dbReference>
<dbReference type="HAMAP" id="MF_01306_B">
    <property type="entry name" value="Ribosomal_uS4_B"/>
    <property type="match status" value="1"/>
</dbReference>
<dbReference type="InterPro" id="IPR022801">
    <property type="entry name" value="Ribosomal_uS4"/>
</dbReference>
<dbReference type="InterPro" id="IPR005709">
    <property type="entry name" value="Ribosomal_uS4_bac-type"/>
</dbReference>
<dbReference type="InterPro" id="IPR018079">
    <property type="entry name" value="Ribosomal_uS4_CS"/>
</dbReference>
<dbReference type="InterPro" id="IPR001912">
    <property type="entry name" value="Ribosomal_uS4_N"/>
</dbReference>
<dbReference type="InterPro" id="IPR002942">
    <property type="entry name" value="S4_RNA-bd"/>
</dbReference>
<dbReference type="InterPro" id="IPR036986">
    <property type="entry name" value="S4_RNA-bd_sf"/>
</dbReference>
<dbReference type="NCBIfam" id="NF003717">
    <property type="entry name" value="PRK05327.1"/>
    <property type="match status" value="1"/>
</dbReference>
<dbReference type="NCBIfam" id="TIGR01017">
    <property type="entry name" value="rpsD_bact"/>
    <property type="match status" value="1"/>
</dbReference>
<dbReference type="PANTHER" id="PTHR11831">
    <property type="entry name" value="30S 40S RIBOSOMAL PROTEIN"/>
    <property type="match status" value="1"/>
</dbReference>
<dbReference type="PANTHER" id="PTHR11831:SF4">
    <property type="entry name" value="SMALL RIBOSOMAL SUBUNIT PROTEIN US4M"/>
    <property type="match status" value="1"/>
</dbReference>
<dbReference type="Pfam" id="PF00163">
    <property type="entry name" value="Ribosomal_S4"/>
    <property type="match status" value="1"/>
</dbReference>
<dbReference type="Pfam" id="PF01479">
    <property type="entry name" value="S4"/>
    <property type="match status" value="1"/>
</dbReference>
<dbReference type="SMART" id="SM01390">
    <property type="entry name" value="Ribosomal_S4"/>
    <property type="match status" value="1"/>
</dbReference>
<dbReference type="SMART" id="SM00363">
    <property type="entry name" value="S4"/>
    <property type="match status" value="1"/>
</dbReference>
<dbReference type="SUPFAM" id="SSF55174">
    <property type="entry name" value="Alpha-L RNA-binding motif"/>
    <property type="match status" value="1"/>
</dbReference>
<dbReference type="PROSITE" id="PS00632">
    <property type="entry name" value="RIBOSOMAL_S4"/>
    <property type="match status" value="1"/>
</dbReference>
<dbReference type="PROSITE" id="PS50889">
    <property type="entry name" value="S4"/>
    <property type="match status" value="1"/>
</dbReference>
<keyword id="KW-0687">Ribonucleoprotein</keyword>
<keyword id="KW-0689">Ribosomal protein</keyword>
<keyword id="KW-0694">RNA-binding</keyword>
<keyword id="KW-0699">rRNA-binding</keyword>
<organism>
    <name type="scientific">Mycobacterium bovis (strain BCG / Pasteur 1173P2)</name>
    <dbReference type="NCBI Taxonomy" id="410289"/>
    <lineage>
        <taxon>Bacteria</taxon>
        <taxon>Bacillati</taxon>
        <taxon>Actinomycetota</taxon>
        <taxon>Actinomycetes</taxon>
        <taxon>Mycobacteriales</taxon>
        <taxon>Mycobacteriaceae</taxon>
        <taxon>Mycobacterium</taxon>
        <taxon>Mycobacterium tuberculosis complex</taxon>
    </lineage>
</organism>
<feature type="chain" id="PRO_0000293315" description="Small ribosomal subunit protein uS4">
    <location>
        <begin position="1"/>
        <end position="201"/>
    </location>
</feature>
<feature type="domain" description="S4 RNA-binding" evidence="1">
    <location>
        <begin position="91"/>
        <end position="157"/>
    </location>
</feature>
<protein>
    <recommendedName>
        <fullName evidence="1">Small ribosomal subunit protein uS4</fullName>
    </recommendedName>
    <alternativeName>
        <fullName evidence="2">30S ribosomal protein S4</fullName>
    </alternativeName>
</protein>
<accession>A1KPE4</accession>
<reference key="1">
    <citation type="journal article" date="2007" name="Proc. Natl. Acad. Sci. U.S.A.">
        <title>Genome plasticity of BCG and impact on vaccine efficacy.</title>
        <authorList>
            <person name="Brosch R."/>
            <person name="Gordon S.V."/>
            <person name="Garnier T."/>
            <person name="Eiglmeier K."/>
            <person name="Frigui W."/>
            <person name="Valenti P."/>
            <person name="Dos Santos S."/>
            <person name="Duthoy S."/>
            <person name="Lacroix C."/>
            <person name="Garcia-Pelayo C."/>
            <person name="Inwald J.K."/>
            <person name="Golby P."/>
            <person name="Garcia J.N."/>
            <person name="Hewinson R.G."/>
            <person name="Behr M.A."/>
            <person name="Quail M.A."/>
            <person name="Churcher C."/>
            <person name="Barrell B.G."/>
            <person name="Parkhill J."/>
            <person name="Cole S.T."/>
        </authorList>
    </citation>
    <scope>NUCLEOTIDE SEQUENCE [LARGE SCALE GENOMIC DNA]</scope>
    <source>
        <strain>BCG / Pasteur 1173P2</strain>
    </source>
</reference>
<evidence type="ECO:0000255" key="1">
    <source>
        <dbReference type="HAMAP-Rule" id="MF_01306"/>
    </source>
</evidence>
<evidence type="ECO:0000305" key="2"/>
<comment type="function">
    <text evidence="1">One of the primary rRNA binding proteins, it binds directly to 16S rRNA where it nucleates assembly of the body of the 30S subunit.</text>
</comment>
<comment type="function">
    <text evidence="1">With S5 and S12 plays an important role in translational accuracy.</text>
</comment>
<comment type="subunit">
    <text evidence="1">Part of the 30S ribosomal subunit. Contacts protein S5. The interaction surface between S4 and S5 is involved in control of translational fidelity.</text>
</comment>
<comment type="similarity">
    <text evidence="1">Belongs to the universal ribosomal protein uS4 family.</text>
</comment>
<proteinExistence type="inferred from homology"/>